<sequence>MSENIIRIATRKSPLAMWQAEFVKAELERIHPGLTVELLPMSTKGDVILDTPLAKIGGKGLFVKELEVAMLENRADIAVHSMKDLPVEFPEGLGLQVICEREDPRDAFVSNNYKSISELPQGAVVGTSSLRRQCQIRAARPDLVIKDLRGNVGTRLAKLDSGDYDAIILAAAGLIRLKLNERIANFISAEESLPANGQGAVGIECRTDDARVKALLAPLEHLETRYRVLAERAMNTRLEGGCQVPIGAFAEINGDNLTLRGLVGNPDGSQIIIGTVSGSKTDAVALGESLAEDLLSRGAKTILDAVYAS</sequence>
<dbReference type="EC" id="2.5.1.61" evidence="1"/>
<dbReference type="EMBL" id="CP000447">
    <property type="protein sequence ID" value="ABI70302.1"/>
    <property type="molecule type" value="Genomic_DNA"/>
</dbReference>
<dbReference type="RefSeq" id="WP_011635929.1">
    <property type="nucleotide sequence ID" value="NC_008345.1"/>
</dbReference>
<dbReference type="SMR" id="Q088L3"/>
<dbReference type="STRING" id="318167.Sfri_0440"/>
<dbReference type="KEGG" id="sfr:Sfri_0440"/>
<dbReference type="eggNOG" id="COG0181">
    <property type="taxonomic scope" value="Bacteria"/>
</dbReference>
<dbReference type="HOGENOM" id="CLU_019704_0_2_6"/>
<dbReference type="OrthoDB" id="9810298at2"/>
<dbReference type="UniPathway" id="UPA00251">
    <property type="reaction ID" value="UER00319"/>
</dbReference>
<dbReference type="Proteomes" id="UP000000684">
    <property type="component" value="Chromosome"/>
</dbReference>
<dbReference type="GO" id="GO:0005737">
    <property type="term" value="C:cytoplasm"/>
    <property type="evidence" value="ECO:0007669"/>
    <property type="project" value="TreeGrafter"/>
</dbReference>
<dbReference type="GO" id="GO:0004418">
    <property type="term" value="F:hydroxymethylbilane synthase activity"/>
    <property type="evidence" value="ECO:0007669"/>
    <property type="project" value="UniProtKB-UniRule"/>
</dbReference>
<dbReference type="GO" id="GO:0006782">
    <property type="term" value="P:protoporphyrinogen IX biosynthetic process"/>
    <property type="evidence" value="ECO:0007669"/>
    <property type="project" value="UniProtKB-UniRule"/>
</dbReference>
<dbReference type="CDD" id="cd13646">
    <property type="entry name" value="PBP2_EcHMBS_like"/>
    <property type="match status" value="1"/>
</dbReference>
<dbReference type="FunFam" id="3.30.160.40:FF:000002">
    <property type="entry name" value="Porphobilinogen deaminase"/>
    <property type="match status" value="1"/>
</dbReference>
<dbReference type="FunFam" id="3.40.190.10:FF:000004">
    <property type="entry name" value="Porphobilinogen deaminase"/>
    <property type="match status" value="1"/>
</dbReference>
<dbReference type="FunFam" id="3.40.190.10:FF:000005">
    <property type="entry name" value="Porphobilinogen deaminase"/>
    <property type="match status" value="1"/>
</dbReference>
<dbReference type="Gene3D" id="3.40.190.10">
    <property type="entry name" value="Periplasmic binding protein-like II"/>
    <property type="match status" value="2"/>
</dbReference>
<dbReference type="Gene3D" id="3.30.160.40">
    <property type="entry name" value="Porphobilinogen deaminase, C-terminal domain"/>
    <property type="match status" value="1"/>
</dbReference>
<dbReference type="HAMAP" id="MF_00260">
    <property type="entry name" value="Porphobil_deam"/>
    <property type="match status" value="1"/>
</dbReference>
<dbReference type="InterPro" id="IPR000860">
    <property type="entry name" value="HemC"/>
</dbReference>
<dbReference type="InterPro" id="IPR022419">
    <property type="entry name" value="Porphobilin_deaminase_cofac_BS"/>
</dbReference>
<dbReference type="InterPro" id="IPR022417">
    <property type="entry name" value="Porphobilin_deaminase_N"/>
</dbReference>
<dbReference type="InterPro" id="IPR022418">
    <property type="entry name" value="Porphobilinogen_deaminase_C"/>
</dbReference>
<dbReference type="InterPro" id="IPR036803">
    <property type="entry name" value="Porphobilinogen_deaminase_C_sf"/>
</dbReference>
<dbReference type="NCBIfam" id="TIGR00212">
    <property type="entry name" value="hemC"/>
    <property type="match status" value="1"/>
</dbReference>
<dbReference type="PANTHER" id="PTHR11557">
    <property type="entry name" value="PORPHOBILINOGEN DEAMINASE"/>
    <property type="match status" value="1"/>
</dbReference>
<dbReference type="PANTHER" id="PTHR11557:SF0">
    <property type="entry name" value="PORPHOBILINOGEN DEAMINASE"/>
    <property type="match status" value="1"/>
</dbReference>
<dbReference type="Pfam" id="PF01379">
    <property type="entry name" value="Porphobil_deam"/>
    <property type="match status" value="1"/>
</dbReference>
<dbReference type="Pfam" id="PF03900">
    <property type="entry name" value="Porphobil_deamC"/>
    <property type="match status" value="1"/>
</dbReference>
<dbReference type="PIRSF" id="PIRSF001438">
    <property type="entry name" value="4pyrrol_synth_OHMeBilane_synth"/>
    <property type="match status" value="1"/>
</dbReference>
<dbReference type="PRINTS" id="PR00151">
    <property type="entry name" value="PORPHBDMNASE"/>
</dbReference>
<dbReference type="SUPFAM" id="SSF53850">
    <property type="entry name" value="Periplasmic binding protein-like II"/>
    <property type="match status" value="1"/>
</dbReference>
<dbReference type="SUPFAM" id="SSF54782">
    <property type="entry name" value="Porphobilinogen deaminase (hydroxymethylbilane synthase), C-terminal domain"/>
    <property type="match status" value="1"/>
</dbReference>
<dbReference type="PROSITE" id="PS00533">
    <property type="entry name" value="PORPHOBILINOGEN_DEAM"/>
    <property type="match status" value="1"/>
</dbReference>
<proteinExistence type="inferred from homology"/>
<keyword id="KW-0627">Porphyrin biosynthesis</keyword>
<keyword id="KW-1185">Reference proteome</keyword>
<keyword id="KW-0808">Transferase</keyword>
<comment type="function">
    <text evidence="1">Tetrapolymerization of the monopyrrole PBG into the hydroxymethylbilane pre-uroporphyrinogen in several discrete steps.</text>
</comment>
<comment type="catalytic activity">
    <reaction evidence="1">
        <text>4 porphobilinogen + H2O = hydroxymethylbilane + 4 NH4(+)</text>
        <dbReference type="Rhea" id="RHEA:13185"/>
        <dbReference type="ChEBI" id="CHEBI:15377"/>
        <dbReference type="ChEBI" id="CHEBI:28938"/>
        <dbReference type="ChEBI" id="CHEBI:57845"/>
        <dbReference type="ChEBI" id="CHEBI:58126"/>
        <dbReference type="EC" id="2.5.1.61"/>
    </reaction>
</comment>
<comment type="cofactor">
    <cofactor evidence="1">
        <name>dipyrromethane</name>
        <dbReference type="ChEBI" id="CHEBI:60342"/>
    </cofactor>
    <text evidence="1">Binds 1 dipyrromethane group covalently.</text>
</comment>
<comment type="pathway">
    <text evidence="1">Porphyrin-containing compound metabolism; protoporphyrin-IX biosynthesis; coproporphyrinogen-III from 5-aminolevulinate: step 2/4.</text>
</comment>
<comment type="subunit">
    <text evidence="1">Monomer.</text>
</comment>
<comment type="miscellaneous">
    <text evidence="1">The porphobilinogen subunits are added to the dipyrromethane group.</text>
</comment>
<comment type="similarity">
    <text evidence="1">Belongs to the HMBS family.</text>
</comment>
<organism>
    <name type="scientific">Shewanella frigidimarina (strain NCIMB 400)</name>
    <dbReference type="NCBI Taxonomy" id="318167"/>
    <lineage>
        <taxon>Bacteria</taxon>
        <taxon>Pseudomonadati</taxon>
        <taxon>Pseudomonadota</taxon>
        <taxon>Gammaproteobacteria</taxon>
        <taxon>Alteromonadales</taxon>
        <taxon>Shewanellaceae</taxon>
        <taxon>Shewanella</taxon>
    </lineage>
</organism>
<gene>
    <name evidence="1" type="primary">hemC</name>
    <name type="ordered locus">Sfri_0440</name>
</gene>
<protein>
    <recommendedName>
        <fullName evidence="1">Porphobilinogen deaminase</fullName>
        <shortName evidence="1">PBG</shortName>
        <ecNumber evidence="1">2.5.1.61</ecNumber>
    </recommendedName>
    <alternativeName>
        <fullName evidence="1">Hydroxymethylbilane synthase</fullName>
        <shortName evidence="1">HMBS</shortName>
    </alternativeName>
    <alternativeName>
        <fullName evidence="1">Pre-uroporphyrinogen synthase</fullName>
    </alternativeName>
</protein>
<name>HEM3_SHEFN</name>
<feature type="chain" id="PRO_0000304271" description="Porphobilinogen deaminase">
    <location>
        <begin position="1"/>
        <end position="309"/>
    </location>
</feature>
<feature type="modified residue" description="S-(dipyrrolylmethanemethyl)cysteine" evidence="1">
    <location>
        <position position="242"/>
    </location>
</feature>
<accession>Q088L3</accession>
<evidence type="ECO:0000255" key="1">
    <source>
        <dbReference type="HAMAP-Rule" id="MF_00260"/>
    </source>
</evidence>
<reference key="1">
    <citation type="submission" date="2006-08" db="EMBL/GenBank/DDBJ databases">
        <title>Complete sequence of Shewanella frigidimarina NCIMB 400.</title>
        <authorList>
            <consortium name="US DOE Joint Genome Institute"/>
            <person name="Copeland A."/>
            <person name="Lucas S."/>
            <person name="Lapidus A."/>
            <person name="Barry K."/>
            <person name="Detter J.C."/>
            <person name="Glavina del Rio T."/>
            <person name="Hammon N."/>
            <person name="Israni S."/>
            <person name="Dalin E."/>
            <person name="Tice H."/>
            <person name="Pitluck S."/>
            <person name="Fredrickson J.K."/>
            <person name="Kolker E."/>
            <person name="McCuel L.A."/>
            <person name="DiChristina T."/>
            <person name="Nealson K.H."/>
            <person name="Newman D."/>
            <person name="Tiedje J.M."/>
            <person name="Zhou J."/>
            <person name="Romine M.F."/>
            <person name="Culley D.E."/>
            <person name="Serres M."/>
            <person name="Chertkov O."/>
            <person name="Brettin T."/>
            <person name="Bruce D."/>
            <person name="Han C."/>
            <person name="Tapia R."/>
            <person name="Gilna P."/>
            <person name="Schmutz J."/>
            <person name="Larimer F."/>
            <person name="Land M."/>
            <person name="Hauser L."/>
            <person name="Kyrpides N."/>
            <person name="Mikhailova N."/>
            <person name="Richardson P."/>
        </authorList>
    </citation>
    <scope>NUCLEOTIDE SEQUENCE [LARGE SCALE GENOMIC DNA]</scope>
    <source>
        <strain>NCIMB 400</strain>
    </source>
</reference>